<dbReference type="EMBL" id="AF022214">
    <property type="protein sequence ID" value="AAC18457.1"/>
    <property type="molecule type" value="Genomic_DNA"/>
</dbReference>
<dbReference type="PIR" id="F72801">
    <property type="entry name" value="F72801"/>
</dbReference>
<dbReference type="RefSeq" id="NP_046832.1">
    <property type="nucleotide sequence ID" value="NC_001900.1"/>
</dbReference>
<dbReference type="SMR" id="O64210"/>
<dbReference type="GeneID" id="1261582"/>
<dbReference type="KEGG" id="vg:1261582"/>
<dbReference type="OrthoDB" id="4808at10239"/>
<dbReference type="Proteomes" id="UP000002131">
    <property type="component" value="Segment"/>
</dbReference>
<dbReference type="GO" id="GO:0019028">
    <property type="term" value="C:viral capsid"/>
    <property type="evidence" value="ECO:0007669"/>
    <property type="project" value="UniProtKB-KW"/>
</dbReference>
<dbReference type="Gene3D" id="3.30.2320.10">
    <property type="entry name" value="hypothetical protein PF0899 domain"/>
    <property type="match status" value="1"/>
</dbReference>
<dbReference type="Gene3D" id="3.30.2400.10">
    <property type="entry name" value="Major capsid protein gp5"/>
    <property type="match status" value="1"/>
</dbReference>
<dbReference type="InterPro" id="IPR024455">
    <property type="entry name" value="Phage_capsid"/>
</dbReference>
<dbReference type="InterPro" id="IPR054612">
    <property type="entry name" value="Phage_capsid-like_C"/>
</dbReference>
<dbReference type="NCBIfam" id="TIGR01554">
    <property type="entry name" value="major_cap_HK97"/>
    <property type="match status" value="1"/>
</dbReference>
<dbReference type="Pfam" id="PF05065">
    <property type="entry name" value="Phage_capsid"/>
    <property type="match status" value="1"/>
</dbReference>
<dbReference type="SUPFAM" id="SSF56563">
    <property type="entry name" value="Major capsid protein gp5"/>
    <property type="match status" value="1"/>
</dbReference>
<reference key="1">
    <citation type="journal article" date="1998" name="J. Mol. Biol.">
        <title>Genome structure of mycobacteriophage D29: implications for phage evolution.</title>
        <authorList>
            <person name="Ford M.E."/>
            <person name="Sarkis G.J."/>
            <person name="Belanger A.E."/>
            <person name="Hendrix R.W."/>
            <person name="Hatfull G.F."/>
        </authorList>
    </citation>
    <scope>NUCLEOTIDE SEQUENCE [LARGE SCALE GENOMIC DNA]</scope>
</reference>
<comment type="subcellular location">
    <subcellularLocation>
        <location evidence="1">Virion</location>
    </subcellularLocation>
</comment>
<comment type="similarity">
    <text evidence="1">Belongs to the L5likevirus major capsid protein gp17 family.</text>
</comment>
<feature type="chain" id="PRO_0000164722" description="Probable major capsid protein gp17">
    <location>
        <begin position="1"/>
        <end position="318"/>
    </location>
</feature>
<organismHost>
    <name type="scientific">Mycobacterium</name>
    <dbReference type="NCBI Taxonomy" id="1763"/>
</organismHost>
<proteinExistence type="inferred from homology"/>
<organism>
    <name type="scientific">Mycobacterium phage D29</name>
    <name type="common">Mycobacteriophage D29</name>
    <dbReference type="NCBI Taxonomy" id="28369"/>
    <lineage>
        <taxon>Viruses</taxon>
        <taxon>Duplodnaviria</taxon>
        <taxon>Heunggongvirae</taxon>
        <taxon>Uroviricota</taxon>
        <taxon>Caudoviricetes</taxon>
        <taxon>Fromanvirus</taxon>
    </lineage>
</organism>
<sequence length="318" mass="33915">MAAGTAFAVDHAQIAQTGDTMFKGYLEPEQAKDYFAEAEKTSIVQQFAQKVPMGTTGQKIPHWVGDVSAQWIGEGDMKPITKGNMTSQTIAPHKIATIFVASAETVRANPANYLGTMRTKVATAFAMAFDGAAMHGTDSPFPTYIGQTTKAISIADTTGATTVYDQVAVNGLSLLVNDGKKWTHTLLDDITEPILNGAKDQNGRPLFIESTYGEAASPFRSGRIVARPTILSDHVVEGTTVGFMGDFSQLIWGQIGGLSFDVTDQATLNLGTVESPNFVSLWQHNLVAVRVEAEYAFHCNDAEAFVALTNVVSGGGEG</sequence>
<protein>
    <recommendedName>
        <fullName evidence="1">Probable major capsid protein gp17</fullName>
    </recommendedName>
    <alternativeName>
        <fullName evidence="1">Gene product 17</fullName>
        <shortName evidence="1">gp17</shortName>
    </alternativeName>
    <alternativeName>
        <fullName evidence="1">Major head protein gp17</fullName>
    </alternativeName>
</protein>
<name>CAPSD_BPMD2</name>
<keyword id="KW-0167">Capsid protein</keyword>
<keyword id="KW-1185">Reference proteome</keyword>
<keyword id="KW-0946">Virion</keyword>
<evidence type="ECO:0000305" key="1"/>
<gene>
    <name type="primary">17</name>
</gene>
<accession>O64210</accession>